<sequence>MKTVTALLLVSLAVVAIEGQHMKSQRCVCLGAGLNMVKPVLIEKIEILPSSPSCGHMEVIATLKNGAGKRCLNPKSKFTKKIIDKIEKNNRNAR</sequence>
<feature type="signal peptide" evidence="2">
    <location>
        <begin position="1"/>
        <end position="19"/>
    </location>
</feature>
<feature type="chain" id="PRO_5006451477" description="C-X-C motif chemokine 11-1">
    <location>
        <begin position="20"/>
        <end position="94"/>
    </location>
</feature>
<feature type="disulfide bond" evidence="1">
    <location>
        <begin position="27"/>
        <end position="54"/>
    </location>
</feature>
<feature type="disulfide bond" evidence="1">
    <location>
        <begin position="29"/>
        <end position="71"/>
    </location>
</feature>
<reference evidence="7" key="1">
    <citation type="journal article" date="2013" name="Nature">
        <title>The zebrafish reference genome sequence and its relationship to the human genome.</title>
        <authorList>
            <person name="Howe K."/>
            <person name="Clark M.D."/>
            <person name="Torroja C.F."/>
            <person name="Torrance J."/>
            <person name="Berthelot C."/>
            <person name="Muffato M."/>
            <person name="Collins J.E."/>
            <person name="Humphray S."/>
            <person name="McLaren K."/>
            <person name="Matthews L."/>
            <person name="McLaren S."/>
            <person name="Sealy I."/>
            <person name="Caccamo M."/>
            <person name="Churcher C."/>
            <person name="Scott C."/>
            <person name="Barrett J.C."/>
            <person name="Koch R."/>
            <person name="Rauch G.J."/>
            <person name="White S."/>
            <person name="Chow W."/>
            <person name="Kilian B."/>
            <person name="Quintais L.T."/>
            <person name="Guerra-Assuncao J.A."/>
            <person name="Zhou Y."/>
            <person name="Gu Y."/>
            <person name="Yen J."/>
            <person name="Vogel J.H."/>
            <person name="Eyre T."/>
            <person name="Redmond S."/>
            <person name="Banerjee R."/>
            <person name="Chi J."/>
            <person name="Fu B."/>
            <person name="Langley E."/>
            <person name="Maguire S.F."/>
            <person name="Laird G.K."/>
            <person name="Lloyd D."/>
            <person name="Kenyon E."/>
            <person name="Donaldson S."/>
            <person name="Sehra H."/>
            <person name="Almeida-King J."/>
            <person name="Loveland J."/>
            <person name="Trevanion S."/>
            <person name="Jones M."/>
            <person name="Quail M."/>
            <person name="Willey D."/>
            <person name="Hunt A."/>
            <person name="Burton J."/>
            <person name="Sims S."/>
            <person name="McLay K."/>
            <person name="Plumb B."/>
            <person name="Davis J."/>
            <person name="Clee C."/>
            <person name="Oliver K."/>
            <person name="Clark R."/>
            <person name="Riddle C."/>
            <person name="Elliot D."/>
            <person name="Threadgold G."/>
            <person name="Harden G."/>
            <person name="Ware D."/>
            <person name="Begum S."/>
            <person name="Mortimore B."/>
            <person name="Kerry G."/>
            <person name="Heath P."/>
            <person name="Phillimore B."/>
            <person name="Tracey A."/>
            <person name="Corby N."/>
            <person name="Dunn M."/>
            <person name="Johnson C."/>
            <person name="Wood J."/>
            <person name="Clark S."/>
            <person name="Pelan S."/>
            <person name="Griffiths G."/>
            <person name="Smith M."/>
            <person name="Glithero R."/>
            <person name="Howden P."/>
            <person name="Barker N."/>
            <person name="Lloyd C."/>
            <person name="Stevens C."/>
            <person name="Harley J."/>
            <person name="Holt K."/>
            <person name="Panagiotidis G."/>
            <person name="Lovell J."/>
            <person name="Beasley H."/>
            <person name="Henderson C."/>
            <person name="Gordon D."/>
            <person name="Auger K."/>
            <person name="Wright D."/>
            <person name="Collins J."/>
            <person name="Raisen C."/>
            <person name="Dyer L."/>
            <person name="Leung K."/>
            <person name="Robertson L."/>
            <person name="Ambridge K."/>
            <person name="Leongamornlert D."/>
            <person name="McGuire S."/>
            <person name="Gilderthorp R."/>
            <person name="Griffiths C."/>
            <person name="Manthravadi D."/>
            <person name="Nichol S."/>
            <person name="Barker G."/>
            <person name="Whitehead S."/>
            <person name="Kay M."/>
            <person name="Brown J."/>
            <person name="Murnane C."/>
            <person name="Gray E."/>
            <person name="Humphries M."/>
            <person name="Sycamore N."/>
            <person name="Barker D."/>
            <person name="Saunders D."/>
            <person name="Wallis J."/>
            <person name="Babbage A."/>
            <person name="Hammond S."/>
            <person name="Mashreghi-Mohammadi M."/>
            <person name="Barr L."/>
            <person name="Martin S."/>
            <person name="Wray P."/>
            <person name="Ellington A."/>
            <person name="Matthews N."/>
            <person name="Ellwood M."/>
            <person name="Woodmansey R."/>
            <person name="Clark G."/>
            <person name="Cooper J."/>
            <person name="Tromans A."/>
            <person name="Grafham D."/>
            <person name="Skuce C."/>
            <person name="Pandian R."/>
            <person name="Andrews R."/>
            <person name="Harrison E."/>
            <person name="Kimberley A."/>
            <person name="Garnett J."/>
            <person name="Fosker N."/>
            <person name="Hall R."/>
            <person name="Garner P."/>
            <person name="Kelly D."/>
            <person name="Bird C."/>
            <person name="Palmer S."/>
            <person name="Gehring I."/>
            <person name="Berger A."/>
            <person name="Dooley C.M."/>
            <person name="Ersan-Urun Z."/>
            <person name="Eser C."/>
            <person name="Geiger H."/>
            <person name="Geisler M."/>
            <person name="Karotki L."/>
            <person name="Kirn A."/>
            <person name="Konantz J."/>
            <person name="Konantz M."/>
            <person name="Oberlander M."/>
            <person name="Rudolph-Geiger S."/>
            <person name="Teucke M."/>
            <person name="Lanz C."/>
            <person name="Raddatz G."/>
            <person name="Osoegawa K."/>
            <person name="Zhu B."/>
            <person name="Rapp A."/>
            <person name="Widaa S."/>
            <person name="Langford C."/>
            <person name="Yang F."/>
            <person name="Schuster S.C."/>
            <person name="Carter N.P."/>
            <person name="Harrow J."/>
            <person name="Ning Z."/>
            <person name="Herrero J."/>
            <person name="Searle S.M."/>
            <person name="Enright A."/>
            <person name="Geisler R."/>
            <person name="Plasterk R.H."/>
            <person name="Lee C."/>
            <person name="Westerfield M."/>
            <person name="de Jong P.J."/>
            <person name="Zon L.I."/>
            <person name="Postlethwait J.H."/>
            <person name="Nusslein-Volhard C."/>
            <person name="Hubbard T.J."/>
            <person name="Roest Crollius H."/>
            <person name="Rogers J."/>
            <person name="Stemple D.L."/>
        </authorList>
    </citation>
    <scope>NUCLEOTIDE SEQUENCE [LARGE SCALE GENOMIC DNA]</scope>
    <source>
        <strain evidence="7">Tuebingen</strain>
    </source>
</reference>
<reference evidence="5" key="2">
    <citation type="journal article" date="2015" name="Dis. Model. Mech.">
        <title>The CXCR3-CXCL11 signaling axis mediates macrophage recruitment and dissemination of mycobacterial infection.</title>
        <authorList>
            <person name="Torraca V."/>
            <person name="Cui C."/>
            <person name="Boland R."/>
            <person name="Bebelman J.P."/>
            <person name="van der Sar A.M."/>
            <person name="Smit M.J."/>
            <person name="Siderius M."/>
            <person name="Spaink H.P."/>
            <person name="Meijer A.H."/>
        </authorList>
    </citation>
    <scope>FUNCTION</scope>
    <scope>SUBCELLULAR LOCATION</scope>
    <scope>INDUCTION</scope>
</reference>
<gene>
    <name type="primary">cxcl11.1</name>
    <name evidence="4" type="synonym">cxcl11aa</name>
</gene>
<accession>A0A0R4INB9</accession>
<keyword id="KW-0145">Chemotaxis</keyword>
<keyword id="KW-0202">Cytokine</keyword>
<keyword id="KW-1015">Disulfide bond</keyword>
<keyword id="KW-1185">Reference proteome</keyword>
<keyword id="KW-0964">Secreted</keyword>
<keyword id="KW-0732">Signal</keyword>
<dbReference type="EMBL" id="BX323596">
    <property type="status" value="NOT_ANNOTATED_CDS"/>
    <property type="molecule type" value="Genomic_DNA"/>
</dbReference>
<dbReference type="RefSeq" id="NP_001373708.1">
    <property type="nucleotide sequence ID" value="NM_001386779.1"/>
</dbReference>
<dbReference type="RefSeq" id="XP_001339307.1">
    <property type="nucleotide sequence ID" value="XM_001339271.6"/>
</dbReference>
<dbReference type="SMR" id="A0A0R4INB9"/>
<dbReference type="FunCoup" id="A0A0R4INB9">
    <property type="interactions" value="856"/>
</dbReference>
<dbReference type="STRING" id="7955.ENSDARP00000135444"/>
<dbReference type="Ensembl" id="ENSDART00000169606">
    <property type="protein sequence ID" value="ENSDARP00000135444"/>
    <property type="gene ID" value="ENSDARG00000100662"/>
</dbReference>
<dbReference type="GeneID" id="798892"/>
<dbReference type="InParanoid" id="A0A0R4INB9"/>
<dbReference type="OMA" id="INNTCIH"/>
<dbReference type="OrthoDB" id="9948647at2759"/>
<dbReference type="Reactome" id="R-DRE-380108">
    <property type="pathway name" value="Chemokine receptors bind chemokines"/>
</dbReference>
<dbReference type="Reactome" id="R-DRE-418594">
    <property type="pathway name" value="G alpha (i) signalling events"/>
</dbReference>
<dbReference type="PRO" id="PR:A0A0R4INB9"/>
<dbReference type="Proteomes" id="UP000000437">
    <property type="component" value="Chromosome 5"/>
</dbReference>
<dbReference type="Bgee" id="ENSDARG00000100662">
    <property type="expression patterns" value="Expressed in spleen and 7 other cell types or tissues"/>
</dbReference>
<dbReference type="GO" id="GO:0005615">
    <property type="term" value="C:extracellular space"/>
    <property type="evidence" value="ECO:0007669"/>
    <property type="project" value="UniProtKB-KW"/>
</dbReference>
<dbReference type="GO" id="GO:0042056">
    <property type="term" value="F:chemoattractant activity"/>
    <property type="evidence" value="ECO:0000314"/>
    <property type="project" value="ZFIN"/>
</dbReference>
<dbReference type="GO" id="GO:0008009">
    <property type="term" value="F:chemokine activity"/>
    <property type="evidence" value="ECO:0007669"/>
    <property type="project" value="InterPro"/>
</dbReference>
<dbReference type="GO" id="GO:0006952">
    <property type="term" value="P:defense response"/>
    <property type="evidence" value="ECO:0007669"/>
    <property type="project" value="InterPro"/>
</dbReference>
<dbReference type="GO" id="GO:0006955">
    <property type="term" value="P:immune response"/>
    <property type="evidence" value="ECO:0007669"/>
    <property type="project" value="InterPro"/>
</dbReference>
<dbReference type="CDD" id="cd00273">
    <property type="entry name" value="Chemokine_CXC"/>
    <property type="match status" value="1"/>
</dbReference>
<dbReference type="FunFam" id="2.40.50.40:FF:000004">
    <property type="entry name" value="C-X-C motif chemokine"/>
    <property type="match status" value="1"/>
</dbReference>
<dbReference type="Gene3D" id="2.40.50.40">
    <property type="match status" value="1"/>
</dbReference>
<dbReference type="InterPro" id="IPR039809">
    <property type="entry name" value="Chemokine_b/g/d"/>
</dbReference>
<dbReference type="InterPro" id="IPR001089">
    <property type="entry name" value="Chemokine_CXC"/>
</dbReference>
<dbReference type="InterPro" id="IPR001811">
    <property type="entry name" value="Chemokine_IL8-like_dom"/>
</dbReference>
<dbReference type="InterPro" id="IPR033899">
    <property type="entry name" value="CXC_Chemokine_domain"/>
</dbReference>
<dbReference type="InterPro" id="IPR036048">
    <property type="entry name" value="Interleukin_8-like_sf"/>
</dbReference>
<dbReference type="PANTHER" id="PTHR12015:SF191">
    <property type="entry name" value="C-X-C MOTIF CHEMOKINE 11"/>
    <property type="match status" value="1"/>
</dbReference>
<dbReference type="PANTHER" id="PTHR12015">
    <property type="entry name" value="SMALL INDUCIBLE CYTOKINE A"/>
    <property type="match status" value="1"/>
</dbReference>
<dbReference type="Pfam" id="PF00048">
    <property type="entry name" value="IL8"/>
    <property type="match status" value="1"/>
</dbReference>
<dbReference type="PRINTS" id="PR00436">
    <property type="entry name" value="INTERLEUKIN8"/>
</dbReference>
<dbReference type="PRINTS" id="PR00437">
    <property type="entry name" value="SMALLCYTKCXC"/>
</dbReference>
<dbReference type="SMART" id="SM00199">
    <property type="entry name" value="SCY"/>
    <property type="match status" value="1"/>
</dbReference>
<dbReference type="SUPFAM" id="SSF54117">
    <property type="entry name" value="Interleukin 8-like chemokines"/>
    <property type="match status" value="1"/>
</dbReference>
<proteinExistence type="evidence at transcript level"/>
<comment type="function">
    <text evidence="3">Ligand for cxcr3.2. Chemotactic for macrophages.</text>
</comment>
<comment type="subcellular location">
    <subcellularLocation>
        <location evidence="6">Secreted</location>
    </subcellularLocation>
</comment>
<comment type="induction">
    <text evidence="3">Up-regulated in response to bacterial infection by S.typhimurium or M.marinum.</text>
</comment>
<comment type="similarity">
    <text evidence="5">Belongs to the intercrine alpha (chemokine CxC) family.</text>
</comment>
<organism evidence="7">
    <name type="scientific">Danio rerio</name>
    <name type="common">Zebrafish</name>
    <name type="synonym">Brachydanio rerio</name>
    <dbReference type="NCBI Taxonomy" id="7955"/>
    <lineage>
        <taxon>Eukaryota</taxon>
        <taxon>Metazoa</taxon>
        <taxon>Chordata</taxon>
        <taxon>Craniata</taxon>
        <taxon>Vertebrata</taxon>
        <taxon>Euteleostomi</taxon>
        <taxon>Actinopterygii</taxon>
        <taxon>Neopterygii</taxon>
        <taxon>Teleostei</taxon>
        <taxon>Ostariophysi</taxon>
        <taxon>Cypriniformes</taxon>
        <taxon>Danionidae</taxon>
        <taxon>Danioninae</taxon>
        <taxon>Danio</taxon>
    </lineage>
</organism>
<evidence type="ECO:0000250" key="1">
    <source>
        <dbReference type="UniProtKB" id="O14625"/>
    </source>
</evidence>
<evidence type="ECO:0000255" key="2"/>
<evidence type="ECO:0000269" key="3">
    <source>
    </source>
</evidence>
<evidence type="ECO:0000303" key="4">
    <source>
    </source>
</evidence>
<evidence type="ECO:0000305" key="5"/>
<evidence type="ECO:0000305" key="6">
    <source>
    </source>
</evidence>
<evidence type="ECO:0000312" key="7">
    <source>
        <dbReference type="Proteomes" id="UP000000437"/>
    </source>
</evidence>
<name>CX111_DANRE</name>
<protein>
    <recommendedName>
        <fullName evidence="5">C-X-C motif chemokine 11-1</fullName>
    </recommendedName>
</protein>